<evidence type="ECO:0000250" key="1"/>
<evidence type="ECO:0000305" key="2"/>
<proteinExistence type="inferred from homology"/>
<gene>
    <name type="primary">polA</name>
    <name type="ordered locus">HP_1470</name>
</gene>
<accession>P56105</accession>
<sequence>MEQPVIKEGTLALIDTFAYLFRSYYMSAKNKPLTNDKGFPTGLLTGLVGMVKKFYKDRKNMPFIVFALESQTKTKRAEKLGEYKQNRKDAPKEMLLQIPIALEWLQKMGFVCVEVNGFEADDVIASLATLSPYKTRIYSKDKDFNQLLSDKIALFDGKTEFLAKDCVEKYGILPSQFTDYQGIVGDSSDNYKGVKGIGSKNAKELLQRLGSLEKIYENLDLAKNLLSPKMYRALIHDKASAFLSKELATLERGCIKEFDFLSCAFPSENPLLKIKDELKEYGFISTLRDLENSPTPLILDNAPLLDNTPALDNTPKKSCMIVLESAAPLSAFLEKLEKTNARVFARLVLDKEKKVLALAFLYEDQGYFLPLEEALFSPFSLEFLQNAFFKMLQHAQIIGHDLKPLLSFLKAKYQVPLENIRIQDTQILAFLKNPEKVGFDEVLKEYLKEELIPHEKIKDFKTKAEKLELLSVELNALKRLCEYFEKGGLEENLLSLAREIETPFMKVLMGMEFQGFKIDAPYFKRLEQEFKNELHVLERQILELIGVDFNLNSPKQLSEVLYDKLGLPKNKSHSTDEKSLLKILDKHPSIALILEYRELNKLFNTYTTPLLRLKDKDDKIHTTFIQTGTATGRLSSHSPNLQNIPVRSPKGLLIRKGFIASSKEYCLLGVDYSQIELRLLAHFSQDKDLMEAFLKGRDIHLETSKALFGEYLAKEKRSIAKSINFGLVYGMGSKKLSETLNISLNEAKSYIEAYFKRFPSIKDYLNRMKEEILKTSKAFTLLGRYRVFDFTGANDYVKGNYLREGVNAIFQGSASDLLKLGMLKVSERFKNNPSVRLLLQVHDELIFEIEEKNAPELQQEIQRILNDEVYPLRVPLETSAFIAKRWNELKG</sequence>
<organism>
    <name type="scientific">Helicobacter pylori (strain ATCC 700392 / 26695)</name>
    <name type="common">Campylobacter pylori</name>
    <dbReference type="NCBI Taxonomy" id="85962"/>
    <lineage>
        <taxon>Bacteria</taxon>
        <taxon>Pseudomonadati</taxon>
        <taxon>Campylobacterota</taxon>
        <taxon>Epsilonproteobacteria</taxon>
        <taxon>Campylobacterales</taxon>
        <taxon>Helicobacteraceae</taxon>
        <taxon>Helicobacter</taxon>
    </lineage>
</organism>
<name>DPO1_HELPY</name>
<comment type="function">
    <text evidence="1">In addition to polymerase activity, this DNA polymerase exhibits 3'-5' and 5'-3' exonuclease activity.</text>
</comment>
<comment type="catalytic activity">
    <reaction>
        <text>DNA(n) + a 2'-deoxyribonucleoside 5'-triphosphate = DNA(n+1) + diphosphate</text>
        <dbReference type="Rhea" id="RHEA:22508"/>
        <dbReference type="Rhea" id="RHEA-COMP:17339"/>
        <dbReference type="Rhea" id="RHEA-COMP:17340"/>
        <dbReference type="ChEBI" id="CHEBI:33019"/>
        <dbReference type="ChEBI" id="CHEBI:61560"/>
        <dbReference type="ChEBI" id="CHEBI:173112"/>
        <dbReference type="EC" id="2.7.7.7"/>
    </reaction>
</comment>
<comment type="subunit">
    <text>Single-chain monomer with multiple functions.</text>
</comment>
<comment type="similarity">
    <text evidence="2">Belongs to the DNA polymerase type-A family.</text>
</comment>
<comment type="sequence caution" evidence="2">
    <conflict type="erroneous initiation">
        <sequence resource="EMBL-CDS" id="AAD08510"/>
    </conflict>
</comment>
<feature type="chain" id="PRO_0000101241" description="DNA polymerase I">
    <location>
        <begin position="1"/>
        <end position="891"/>
    </location>
</feature>
<feature type="domain" description="5'-3' exonuclease">
    <location>
        <begin position="1"/>
        <end position="313"/>
    </location>
</feature>
<feature type="domain" description="3'-5' exonuclease">
    <location>
        <begin position="314"/>
        <end position="488"/>
    </location>
</feature>
<feature type="region of interest" description="Polymerase">
    <location>
        <begin position="492"/>
        <end position="890"/>
    </location>
</feature>
<protein>
    <recommendedName>
        <fullName>DNA polymerase I</fullName>
        <shortName>POL I</shortName>
        <ecNumber>2.7.7.7</ecNumber>
    </recommendedName>
</protein>
<reference key="1">
    <citation type="journal article" date="1997" name="Nature">
        <title>The complete genome sequence of the gastric pathogen Helicobacter pylori.</title>
        <authorList>
            <person name="Tomb J.-F."/>
            <person name="White O."/>
            <person name="Kerlavage A.R."/>
            <person name="Clayton R.A."/>
            <person name="Sutton G.G."/>
            <person name="Fleischmann R.D."/>
            <person name="Ketchum K.A."/>
            <person name="Klenk H.-P."/>
            <person name="Gill S.R."/>
            <person name="Dougherty B.A."/>
            <person name="Nelson K.E."/>
            <person name="Quackenbush J."/>
            <person name="Zhou L."/>
            <person name="Kirkness E.F."/>
            <person name="Peterson S.N."/>
            <person name="Loftus B.J."/>
            <person name="Richardson D.L."/>
            <person name="Dodson R.J."/>
            <person name="Khalak H.G."/>
            <person name="Glodek A."/>
            <person name="McKenney K."/>
            <person name="FitzGerald L.M."/>
            <person name="Lee N."/>
            <person name="Adams M.D."/>
            <person name="Hickey E.K."/>
            <person name="Berg D.E."/>
            <person name="Gocayne J.D."/>
            <person name="Utterback T.R."/>
            <person name="Peterson J.D."/>
            <person name="Kelley J.M."/>
            <person name="Cotton M.D."/>
            <person name="Weidman J.F."/>
            <person name="Fujii C."/>
            <person name="Bowman C."/>
            <person name="Watthey L."/>
            <person name="Wallin E."/>
            <person name="Hayes W.S."/>
            <person name="Borodovsky M."/>
            <person name="Karp P.D."/>
            <person name="Smith H.O."/>
            <person name="Fraser C.M."/>
            <person name="Venter J.C."/>
        </authorList>
    </citation>
    <scope>NUCLEOTIDE SEQUENCE [LARGE SCALE GENOMIC DNA]</scope>
    <source>
        <strain>ATCC 700392 / 26695</strain>
    </source>
</reference>
<keyword id="KW-0227">DNA damage</keyword>
<keyword id="KW-0234">DNA repair</keyword>
<keyword id="KW-0235">DNA replication</keyword>
<keyword id="KW-0238">DNA-binding</keyword>
<keyword id="KW-0239">DNA-directed DNA polymerase</keyword>
<keyword id="KW-0269">Exonuclease</keyword>
<keyword id="KW-0378">Hydrolase</keyword>
<keyword id="KW-0540">Nuclease</keyword>
<keyword id="KW-0548">Nucleotidyltransferase</keyword>
<keyword id="KW-1185">Reference proteome</keyword>
<keyword id="KW-0808">Transferase</keyword>
<dbReference type="EC" id="2.7.7.7"/>
<dbReference type="EMBL" id="AE000511">
    <property type="protein sequence ID" value="AAD08510.1"/>
    <property type="status" value="ALT_INIT"/>
    <property type="molecule type" value="Genomic_DNA"/>
</dbReference>
<dbReference type="PIR" id="F64703">
    <property type="entry name" value="F64703"/>
</dbReference>
<dbReference type="RefSeq" id="NP_208261.1">
    <property type="nucleotide sequence ID" value="NC_000915.1"/>
</dbReference>
<dbReference type="RefSeq" id="WP_000437576.1">
    <property type="nucleotide sequence ID" value="NC_018939.1"/>
</dbReference>
<dbReference type="SMR" id="P56105"/>
<dbReference type="DIP" id="DIP-3098N"/>
<dbReference type="FunCoup" id="P56105">
    <property type="interactions" value="360"/>
</dbReference>
<dbReference type="IntAct" id="P56105">
    <property type="interactions" value="6"/>
</dbReference>
<dbReference type="MINT" id="P56105"/>
<dbReference type="STRING" id="85962.HP_1470"/>
<dbReference type="PaxDb" id="85962-C694_07610"/>
<dbReference type="EnsemblBacteria" id="AAD08510">
    <property type="protein sequence ID" value="AAD08510"/>
    <property type="gene ID" value="HP_1470"/>
</dbReference>
<dbReference type="KEGG" id="heo:C694_07610"/>
<dbReference type="KEGG" id="hpy:HP_1470"/>
<dbReference type="PATRIC" id="fig|85962.47.peg.1581"/>
<dbReference type="eggNOG" id="COG0258">
    <property type="taxonomic scope" value="Bacteria"/>
</dbReference>
<dbReference type="eggNOG" id="COG0749">
    <property type="taxonomic scope" value="Bacteria"/>
</dbReference>
<dbReference type="InParanoid" id="P56105"/>
<dbReference type="OrthoDB" id="9806424at2"/>
<dbReference type="PhylomeDB" id="P56105"/>
<dbReference type="Proteomes" id="UP000000429">
    <property type="component" value="Chromosome"/>
</dbReference>
<dbReference type="GO" id="GO:0008408">
    <property type="term" value="F:3'-5' exonuclease activity"/>
    <property type="evidence" value="ECO:0007669"/>
    <property type="project" value="InterPro"/>
</dbReference>
<dbReference type="GO" id="GO:0008409">
    <property type="term" value="F:5'-3' exonuclease activity"/>
    <property type="evidence" value="ECO:0007669"/>
    <property type="project" value="InterPro"/>
</dbReference>
<dbReference type="GO" id="GO:0003677">
    <property type="term" value="F:DNA binding"/>
    <property type="evidence" value="ECO:0007669"/>
    <property type="project" value="UniProtKB-KW"/>
</dbReference>
<dbReference type="GO" id="GO:0003887">
    <property type="term" value="F:DNA-directed DNA polymerase activity"/>
    <property type="evidence" value="ECO:0000318"/>
    <property type="project" value="GO_Central"/>
</dbReference>
<dbReference type="GO" id="GO:0006261">
    <property type="term" value="P:DNA-templated DNA replication"/>
    <property type="evidence" value="ECO:0007669"/>
    <property type="project" value="InterPro"/>
</dbReference>
<dbReference type="GO" id="GO:0006302">
    <property type="term" value="P:double-strand break repair"/>
    <property type="evidence" value="ECO:0000318"/>
    <property type="project" value="GO_Central"/>
</dbReference>
<dbReference type="CDD" id="cd08637">
    <property type="entry name" value="DNA_pol_A_pol_I_C"/>
    <property type="match status" value="1"/>
</dbReference>
<dbReference type="CDD" id="cd09898">
    <property type="entry name" value="H3TH_53EXO"/>
    <property type="match status" value="1"/>
</dbReference>
<dbReference type="CDD" id="cd09859">
    <property type="entry name" value="PIN_53EXO"/>
    <property type="match status" value="1"/>
</dbReference>
<dbReference type="FunFam" id="1.10.150.20:FF:000002">
    <property type="entry name" value="DNA polymerase I"/>
    <property type="match status" value="1"/>
</dbReference>
<dbReference type="FunFam" id="1.10.150.20:FF:000003">
    <property type="entry name" value="DNA polymerase I"/>
    <property type="match status" value="1"/>
</dbReference>
<dbReference type="FunFam" id="3.40.50.1010:FF:000095">
    <property type="entry name" value="DNA polymerase I"/>
    <property type="match status" value="1"/>
</dbReference>
<dbReference type="Gene3D" id="3.30.70.370">
    <property type="match status" value="1"/>
</dbReference>
<dbReference type="Gene3D" id="1.10.150.20">
    <property type="entry name" value="5' to 3' exonuclease, C-terminal subdomain"/>
    <property type="match status" value="2"/>
</dbReference>
<dbReference type="Gene3D" id="3.40.50.1010">
    <property type="entry name" value="5'-nuclease"/>
    <property type="match status" value="1"/>
</dbReference>
<dbReference type="Gene3D" id="3.30.420.10">
    <property type="entry name" value="Ribonuclease H-like superfamily/Ribonuclease H"/>
    <property type="match status" value="1"/>
</dbReference>
<dbReference type="Gene3D" id="1.20.1060.10">
    <property type="entry name" value="Taq DNA Polymerase, Chain T, domain 4"/>
    <property type="match status" value="1"/>
</dbReference>
<dbReference type="InterPro" id="IPR002562">
    <property type="entry name" value="3'-5'_exonuclease_dom"/>
</dbReference>
<dbReference type="InterPro" id="IPR020046">
    <property type="entry name" value="5-3_exonucl_a-hlix_arch_N"/>
</dbReference>
<dbReference type="InterPro" id="IPR002421">
    <property type="entry name" value="5-3_exonuclease"/>
</dbReference>
<dbReference type="InterPro" id="IPR036279">
    <property type="entry name" value="5-3_exonuclease_C_sf"/>
</dbReference>
<dbReference type="InterPro" id="IPR019760">
    <property type="entry name" value="DNA-dir_DNA_pol_A_CS"/>
</dbReference>
<dbReference type="InterPro" id="IPR001098">
    <property type="entry name" value="DNA-dir_DNA_pol_A_palm_dom"/>
</dbReference>
<dbReference type="InterPro" id="IPR043502">
    <property type="entry name" value="DNA/RNA_pol_sf"/>
</dbReference>
<dbReference type="InterPro" id="IPR020045">
    <property type="entry name" value="DNA_polI_H3TH"/>
</dbReference>
<dbReference type="InterPro" id="IPR018320">
    <property type="entry name" value="DNA_polymerase_1"/>
</dbReference>
<dbReference type="InterPro" id="IPR002298">
    <property type="entry name" value="DNA_polymerase_A"/>
</dbReference>
<dbReference type="InterPro" id="IPR008918">
    <property type="entry name" value="HhH2"/>
</dbReference>
<dbReference type="InterPro" id="IPR029060">
    <property type="entry name" value="PIN-like_dom_sf"/>
</dbReference>
<dbReference type="InterPro" id="IPR012337">
    <property type="entry name" value="RNaseH-like_sf"/>
</dbReference>
<dbReference type="InterPro" id="IPR036397">
    <property type="entry name" value="RNaseH_sf"/>
</dbReference>
<dbReference type="NCBIfam" id="TIGR00593">
    <property type="entry name" value="pola"/>
    <property type="match status" value="1"/>
</dbReference>
<dbReference type="NCBIfam" id="NF004397">
    <property type="entry name" value="PRK05755.1"/>
    <property type="match status" value="1"/>
</dbReference>
<dbReference type="PANTHER" id="PTHR10133">
    <property type="entry name" value="DNA POLYMERASE I"/>
    <property type="match status" value="1"/>
</dbReference>
<dbReference type="PANTHER" id="PTHR10133:SF27">
    <property type="entry name" value="DNA POLYMERASE NU"/>
    <property type="match status" value="1"/>
</dbReference>
<dbReference type="Pfam" id="PF01367">
    <property type="entry name" value="5_3_exonuc"/>
    <property type="match status" value="1"/>
</dbReference>
<dbReference type="Pfam" id="PF02739">
    <property type="entry name" value="5_3_exonuc_N"/>
    <property type="match status" value="1"/>
</dbReference>
<dbReference type="Pfam" id="PF00476">
    <property type="entry name" value="DNA_pol_A"/>
    <property type="match status" value="1"/>
</dbReference>
<dbReference type="PRINTS" id="PR00868">
    <property type="entry name" value="DNAPOLI"/>
</dbReference>
<dbReference type="SMART" id="SM00474">
    <property type="entry name" value="35EXOc"/>
    <property type="match status" value="1"/>
</dbReference>
<dbReference type="SMART" id="SM00475">
    <property type="entry name" value="53EXOc"/>
    <property type="match status" value="1"/>
</dbReference>
<dbReference type="SMART" id="SM00279">
    <property type="entry name" value="HhH2"/>
    <property type="match status" value="1"/>
</dbReference>
<dbReference type="SMART" id="SM00482">
    <property type="entry name" value="POLAc"/>
    <property type="match status" value="1"/>
</dbReference>
<dbReference type="SUPFAM" id="SSF47807">
    <property type="entry name" value="5' to 3' exonuclease, C-terminal subdomain"/>
    <property type="match status" value="1"/>
</dbReference>
<dbReference type="SUPFAM" id="SSF56672">
    <property type="entry name" value="DNA/RNA polymerases"/>
    <property type="match status" value="1"/>
</dbReference>
<dbReference type="SUPFAM" id="SSF88723">
    <property type="entry name" value="PIN domain-like"/>
    <property type="match status" value="1"/>
</dbReference>
<dbReference type="SUPFAM" id="SSF53098">
    <property type="entry name" value="Ribonuclease H-like"/>
    <property type="match status" value="1"/>
</dbReference>
<dbReference type="PROSITE" id="PS00447">
    <property type="entry name" value="DNA_POLYMERASE_A"/>
    <property type="match status" value="1"/>
</dbReference>